<accession>Q99645</accession>
<accession>A8K3M7</accession>
<accession>Q8NEJ5</accession>
<feature type="signal peptide" evidence="3">
    <location>
        <begin position="1"/>
        <end position="19"/>
    </location>
</feature>
<feature type="chain" id="PRO_0000032768" description="Epiphycan">
    <location>
        <begin position="20"/>
        <end position="322"/>
    </location>
</feature>
<feature type="domain" description="LRRNT">
    <location>
        <begin position="106"/>
        <end position="143"/>
    </location>
</feature>
<feature type="repeat" description="LRR 1">
    <location>
        <begin position="144"/>
        <end position="165"/>
    </location>
</feature>
<feature type="repeat" description="LRR 2">
    <location>
        <begin position="168"/>
        <end position="189"/>
    </location>
</feature>
<feature type="repeat" description="LRR 3">
    <location>
        <begin position="192"/>
        <end position="213"/>
    </location>
</feature>
<feature type="repeat" description="LRR 4">
    <location>
        <begin position="238"/>
        <end position="258"/>
    </location>
</feature>
<feature type="repeat" description="LRR 5">
    <location>
        <begin position="259"/>
        <end position="280"/>
    </location>
</feature>
<feature type="repeat" description="LRR 6">
    <location>
        <begin position="290"/>
        <end position="310"/>
    </location>
</feature>
<feature type="region of interest" description="Disordered" evidence="4">
    <location>
        <begin position="64"/>
        <end position="101"/>
    </location>
</feature>
<feature type="glycosylation site" description="O-linked (GalNAc...) threonine" evidence="2">
    <location>
        <position position="60"/>
    </location>
</feature>
<feature type="glycosylation site" description="O-linked (Xyl...) (dermatan sulfate) serine" evidence="2">
    <location>
        <position position="64"/>
    </location>
</feature>
<feature type="glycosylation site" description="O-linked (GalNAc...) serine" evidence="2">
    <location>
        <position position="96"/>
    </location>
</feature>
<feature type="glycosylation site" description="N-linked (GlcNAc...) asparagine" evidence="3">
    <location>
        <position position="283"/>
    </location>
</feature>
<feature type="glycosylation site" description="N-linked (GlcNAc...) asparagine" evidence="3">
    <location>
        <position position="302"/>
    </location>
</feature>
<feature type="disulfide bond" evidence="1">
    <location>
        <begin position="118"/>
        <end position="130"/>
    </location>
</feature>
<feature type="disulfide bond" evidence="1">
    <location>
        <begin position="279"/>
        <end position="312"/>
    </location>
</feature>
<feature type="sequence variant" id="VAR_031595" description="In dbSNP:rs17784152.">
    <original>S</original>
    <variation>C</variation>
    <location>
        <position position="150"/>
    </location>
</feature>
<feature type="sequence conflict" description="In Ref. 1; AAC50945." evidence="6" ref="1">
    <original>F</original>
    <variation>L</variation>
    <location>
        <position position="14"/>
    </location>
</feature>
<feature type="sequence conflict" description="In Ref. 4; AAH30958." evidence="6" ref="4">
    <original>D</original>
    <variation>G</variation>
    <location>
        <position position="52"/>
    </location>
</feature>
<feature type="sequence conflict" description="In Ref. 1; AAC50945." evidence="6" ref="1">
    <original>L</original>
    <variation>W</variation>
    <location>
        <position position="120"/>
    </location>
</feature>
<feature type="sequence conflict" description="In Ref. 1; AAC50945." evidence="6" ref="1">
    <original>L</original>
    <variation>S</variation>
    <location>
        <position position="213"/>
    </location>
</feature>
<feature type="sequence conflict" description="In Ref. 1; AAC50945." evidence="6" ref="1">
    <original>V</original>
    <variation>G</variation>
    <location>
        <position position="281"/>
    </location>
</feature>
<gene>
    <name type="primary">EPYC</name>
    <name type="synonym">DSPG3</name>
    <name type="synonym">PGLB</name>
    <name type="synonym">SLRR3B</name>
</gene>
<organism>
    <name type="scientific">Homo sapiens</name>
    <name type="common">Human</name>
    <dbReference type="NCBI Taxonomy" id="9606"/>
    <lineage>
        <taxon>Eukaryota</taxon>
        <taxon>Metazoa</taxon>
        <taxon>Chordata</taxon>
        <taxon>Craniata</taxon>
        <taxon>Vertebrata</taxon>
        <taxon>Euteleostomi</taxon>
        <taxon>Mammalia</taxon>
        <taxon>Eutheria</taxon>
        <taxon>Euarchontoglires</taxon>
        <taxon>Primates</taxon>
        <taxon>Haplorrhini</taxon>
        <taxon>Catarrhini</taxon>
        <taxon>Hominidae</taxon>
        <taxon>Homo</taxon>
    </lineage>
</organism>
<dbReference type="EMBL" id="U59111">
    <property type="protein sequence ID" value="AAC50945.1"/>
    <property type="molecule type" value="mRNA"/>
</dbReference>
<dbReference type="EMBL" id="AK290642">
    <property type="protein sequence ID" value="BAF83331.1"/>
    <property type="molecule type" value="mRNA"/>
</dbReference>
<dbReference type="EMBL" id="CH471054">
    <property type="protein sequence ID" value="EAW97444.1"/>
    <property type="molecule type" value="Genomic_DNA"/>
</dbReference>
<dbReference type="EMBL" id="BC030958">
    <property type="protein sequence ID" value="AAH30958.1"/>
    <property type="molecule type" value="mRNA"/>
</dbReference>
<dbReference type="CCDS" id="CCDS31870.1"/>
<dbReference type="RefSeq" id="NP_004941.2">
    <property type="nucleotide sequence ID" value="NM_004950.5"/>
</dbReference>
<dbReference type="SMR" id="Q99645"/>
<dbReference type="BioGRID" id="108167">
    <property type="interactions" value="3"/>
</dbReference>
<dbReference type="FunCoup" id="Q99645">
    <property type="interactions" value="3"/>
</dbReference>
<dbReference type="IntAct" id="Q99645">
    <property type="interactions" value="2"/>
</dbReference>
<dbReference type="STRING" id="9606.ENSP00000261172"/>
<dbReference type="GlyCosmos" id="Q99645">
    <property type="glycosylation" value="5 sites, No reported glycans"/>
</dbReference>
<dbReference type="GlyGen" id="Q99645">
    <property type="glycosylation" value="5 sites, 1 O-linked glycan (2 sites)"/>
</dbReference>
<dbReference type="iPTMnet" id="Q99645"/>
<dbReference type="PhosphoSitePlus" id="Q99645"/>
<dbReference type="BioMuta" id="EPYC"/>
<dbReference type="DMDM" id="143811386"/>
<dbReference type="MassIVE" id="Q99645"/>
<dbReference type="PaxDb" id="9606-ENSP00000261172"/>
<dbReference type="PeptideAtlas" id="Q99645"/>
<dbReference type="ProteomicsDB" id="78378"/>
<dbReference type="Antibodypedia" id="29993">
    <property type="antibodies" value="122 antibodies from 22 providers"/>
</dbReference>
<dbReference type="DNASU" id="1833"/>
<dbReference type="Ensembl" id="ENST00000261172.8">
    <property type="protein sequence ID" value="ENSP00000261172.3"/>
    <property type="gene ID" value="ENSG00000083782.8"/>
</dbReference>
<dbReference type="GeneID" id="1833"/>
<dbReference type="KEGG" id="hsa:1833"/>
<dbReference type="MANE-Select" id="ENST00000261172.8">
    <property type="protein sequence ID" value="ENSP00000261172.3"/>
    <property type="RefSeq nucleotide sequence ID" value="NM_004950.5"/>
    <property type="RefSeq protein sequence ID" value="NP_004941.2"/>
</dbReference>
<dbReference type="UCSC" id="uc001tbk.3">
    <property type="organism name" value="human"/>
</dbReference>
<dbReference type="AGR" id="HGNC:3053"/>
<dbReference type="CTD" id="1833"/>
<dbReference type="DisGeNET" id="1833"/>
<dbReference type="GeneCards" id="EPYC"/>
<dbReference type="HGNC" id="HGNC:3053">
    <property type="gene designation" value="EPYC"/>
</dbReference>
<dbReference type="HPA" id="ENSG00000083782">
    <property type="expression patterns" value="Tissue enriched (placenta)"/>
</dbReference>
<dbReference type="MIM" id="601657">
    <property type="type" value="gene"/>
</dbReference>
<dbReference type="neXtProt" id="NX_Q99645"/>
<dbReference type="OpenTargets" id="ENSG00000083782"/>
<dbReference type="PharmGKB" id="PA162385144"/>
<dbReference type="VEuPathDB" id="HostDB:ENSG00000083782"/>
<dbReference type="eggNOG" id="KOG0619">
    <property type="taxonomic scope" value="Eukaryota"/>
</dbReference>
<dbReference type="GeneTree" id="ENSGT00940000157574"/>
<dbReference type="HOGENOM" id="CLU_067583_0_0_1"/>
<dbReference type="InParanoid" id="Q99645"/>
<dbReference type="OMA" id="EFYDIPL"/>
<dbReference type="OrthoDB" id="676979at2759"/>
<dbReference type="PAN-GO" id="Q99645">
    <property type="GO annotations" value="3 GO annotations based on evolutionary models"/>
</dbReference>
<dbReference type="PhylomeDB" id="Q99645"/>
<dbReference type="TreeFam" id="TF351924"/>
<dbReference type="PathwayCommons" id="Q99645"/>
<dbReference type="SignaLink" id="Q99645"/>
<dbReference type="BioGRID-ORCS" id="1833">
    <property type="hits" value="11 hits in 1139 CRISPR screens"/>
</dbReference>
<dbReference type="ChiTaRS" id="EPYC">
    <property type="organism name" value="human"/>
</dbReference>
<dbReference type="GenomeRNAi" id="1833"/>
<dbReference type="Pharos" id="Q99645">
    <property type="development level" value="Tbio"/>
</dbReference>
<dbReference type="PRO" id="PR:Q99645"/>
<dbReference type="Proteomes" id="UP000005640">
    <property type="component" value="Chromosome 12"/>
</dbReference>
<dbReference type="RNAct" id="Q99645">
    <property type="molecule type" value="protein"/>
</dbReference>
<dbReference type="Bgee" id="ENSG00000083782">
    <property type="expression patterns" value="Expressed in cartilage tissue and 47 other cell types or tissues"/>
</dbReference>
<dbReference type="ExpressionAtlas" id="Q99645">
    <property type="expression patterns" value="baseline and differential"/>
</dbReference>
<dbReference type="GO" id="GO:0031012">
    <property type="term" value="C:extracellular matrix"/>
    <property type="evidence" value="ECO:0000318"/>
    <property type="project" value="GO_Central"/>
</dbReference>
<dbReference type="GO" id="GO:0005576">
    <property type="term" value="C:extracellular region"/>
    <property type="evidence" value="ECO:0007669"/>
    <property type="project" value="UniProtKB-KW"/>
</dbReference>
<dbReference type="GO" id="GO:0005539">
    <property type="term" value="F:glycosaminoglycan binding"/>
    <property type="evidence" value="ECO:0000304"/>
    <property type="project" value="ProtInc"/>
</dbReference>
<dbReference type="GO" id="GO:0061975">
    <property type="term" value="P:articular cartilage development"/>
    <property type="evidence" value="ECO:0000318"/>
    <property type="project" value="GO_Central"/>
</dbReference>
<dbReference type="GO" id="GO:0060348">
    <property type="term" value="P:bone development"/>
    <property type="evidence" value="ECO:0000318"/>
    <property type="project" value="GO_Central"/>
</dbReference>
<dbReference type="GO" id="GO:0007565">
    <property type="term" value="P:female pregnancy"/>
    <property type="evidence" value="ECO:0000304"/>
    <property type="project" value="ProtInc"/>
</dbReference>
<dbReference type="GO" id="GO:0007605">
    <property type="term" value="P:sensory perception of sound"/>
    <property type="evidence" value="ECO:0007669"/>
    <property type="project" value="Ensembl"/>
</dbReference>
<dbReference type="FunFam" id="3.80.10.10:FF:000167">
    <property type="entry name" value="epiphycan"/>
    <property type="match status" value="1"/>
</dbReference>
<dbReference type="Gene3D" id="3.80.10.10">
    <property type="entry name" value="Ribonuclease Inhibitor"/>
    <property type="match status" value="1"/>
</dbReference>
<dbReference type="InterPro" id="IPR001611">
    <property type="entry name" value="Leu-rich_rpt"/>
</dbReference>
<dbReference type="InterPro" id="IPR003591">
    <property type="entry name" value="Leu-rich_rpt_typical-subtyp"/>
</dbReference>
<dbReference type="InterPro" id="IPR032675">
    <property type="entry name" value="LRR_dom_sf"/>
</dbReference>
<dbReference type="InterPro" id="IPR000372">
    <property type="entry name" value="LRRNT"/>
</dbReference>
<dbReference type="InterPro" id="IPR043547">
    <property type="entry name" value="Mimecan/Epiphycan/Opticin"/>
</dbReference>
<dbReference type="PANTHER" id="PTHR46269:SF3">
    <property type="entry name" value="EPIPHYCAN"/>
    <property type="match status" value="1"/>
</dbReference>
<dbReference type="PANTHER" id="PTHR46269">
    <property type="entry name" value="EPIPHYCAN-RELATED"/>
    <property type="match status" value="1"/>
</dbReference>
<dbReference type="Pfam" id="PF00560">
    <property type="entry name" value="LRR_1"/>
    <property type="match status" value="1"/>
</dbReference>
<dbReference type="Pfam" id="PF13855">
    <property type="entry name" value="LRR_8"/>
    <property type="match status" value="1"/>
</dbReference>
<dbReference type="Pfam" id="PF01462">
    <property type="entry name" value="LRRNT"/>
    <property type="match status" value="1"/>
</dbReference>
<dbReference type="SMART" id="SM00369">
    <property type="entry name" value="LRR_TYP"/>
    <property type="match status" value="4"/>
</dbReference>
<dbReference type="SMART" id="SM00013">
    <property type="entry name" value="LRRNT"/>
    <property type="match status" value="1"/>
</dbReference>
<dbReference type="SUPFAM" id="SSF52058">
    <property type="entry name" value="L domain-like"/>
    <property type="match status" value="1"/>
</dbReference>
<dbReference type="PROSITE" id="PS51450">
    <property type="entry name" value="LRR"/>
    <property type="match status" value="4"/>
</dbReference>
<reference key="1">
    <citation type="journal article" date="1996" name="Genomics">
        <title>Characterization of human DSPG3, a small dermatan sulfate proteoglycan.</title>
        <authorList>
            <person name="Deere M."/>
            <person name="Johnson H.J."/>
            <person name="Garza S."/>
            <person name="Harrison W.R."/>
            <person name="Yoon S.-J."/>
            <person name="Elder F.F.B."/>
            <person name="Kucherlapati R."/>
            <person name="Hoeoek M."/>
            <person name="Hecht J.T."/>
        </authorList>
    </citation>
    <scope>NUCLEOTIDE SEQUENCE [MRNA]</scope>
    <scope>TISSUE SPECIFICITY</scope>
    <source>
        <tissue>Chondrocyte</tissue>
    </source>
</reference>
<reference key="2">
    <citation type="journal article" date="2004" name="Nat. Genet.">
        <title>Complete sequencing and characterization of 21,243 full-length human cDNAs.</title>
        <authorList>
            <person name="Ota T."/>
            <person name="Suzuki Y."/>
            <person name="Nishikawa T."/>
            <person name="Otsuki T."/>
            <person name="Sugiyama T."/>
            <person name="Irie R."/>
            <person name="Wakamatsu A."/>
            <person name="Hayashi K."/>
            <person name="Sato H."/>
            <person name="Nagai K."/>
            <person name="Kimura K."/>
            <person name="Makita H."/>
            <person name="Sekine M."/>
            <person name="Obayashi M."/>
            <person name="Nishi T."/>
            <person name="Shibahara T."/>
            <person name="Tanaka T."/>
            <person name="Ishii S."/>
            <person name="Yamamoto J."/>
            <person name="Saito K."/>
            <person name="Kawai Y."/>
            <person name="Isono Y."/>
            <person name="Nakamura Y."/>
            <person name="Nagahari K."/>
            <person name="Murakami K."/>
            <person name="Yasuda T."/>
            <person name="Iwayanagi T."/>
            <person name="Wagatsuma M."/>
            <person name="Shiratori A."/>
            <person name="Sudo H."/>
            <person name="Hosoiri T."/>
            <person name="Kaku Y."/>
            <person name="Kodaira H."/>
            <person name="Kondo H."/>
            <person name="Sugawara M."/>
            <person name="Takahashi M."/>
            <person name="Kanda K."/>
            <person name="Yokoi T."/>
            <person name="Furuya T."/>
            <person name="Kikkawa E."/>
            <person name="Omura Y."/>
            <person name="Abe K."/>
            <person name="Kamihara K."/>
            <person name="Katsuta N."/>
            <person name="Sato K."/>
            <person name="Tanikawa M."/>
            <person name="Yamazaki M."/>
            <person name="Ninomiya K."/>
            <person name="Ishibashi T."/>
            <person name="Yamashita H."/>
            <person name="Murakawa K."/>
            <person name="Fujimori K."/>
            <person name="Tanai H."/>
            <person name="Kimata M."/>
            <person name="Watanabe M."/>
            <person name="Hiraoka S."/>
            <person name="Chiba Y."/>
            <person name="Ishida S."/>
            <person name="Ono Y."/>
            <person name="Takiguchi S."/>
            <person name="Watanabe S."/>
            <person name="Yosida M."/>
            <person name="Hotuta T."/>
            <person name="Kusano J."/>
            <person name="Kanehori K."/>
            <person name="Takahashi-Fujii A."/>
            <person name="Hara H."/>
            <person name="Tanase T.-O."/>
            <person name="Nomura Y."/>
            <person name="Togiya S."/>
            <person name="Komai F."/>
            <person name="Hara R."/>
            <person name="Takeuchi K."/>
            <person name="Arita M."/>
            <person name="Imose N."/>
            <person name="Musashino K."/>
            <person name="Yuuki H."/>
            <person name="Oshima A."/>
            <person name="Sasaki N."/>
            <person name="Aotsuka S."/>
            <person name="Yoshikawa Y."/>
            <person name="Matsunawa H."/>
            <person name="Ichihara T."/>
            <person name="Shiohata N."/>
            <person name="Sano S."/>
            <person name="Moriya S."/>
            <person name="Momiyama H."/>
            <person name="Satoh N."/>
            <person name="Takami S."/>
            <person name="Terashima Y."/>
            <person name="Suzuki O."/>
            <person name="Nakagawa S."/>
            <person name="Senoh A."/>
            <person name="Mizoguchi H."/>
            <person name="Goto Y."/>
            <person name="Shimizu F."/>
            <person name="Wakebe H."/>
            <person name="Hishigaki H."/>
            <person name="Watanabe T."/>
            <person name="Sugiyama A."/>
            <person name="Takemoto M."/>
            <person name="Kawakami B."/>
            <person name="Yamazaki M."/>
            <person name="Watanabe K."/>
            <person name="Kumagai A."/>
            <person name="Itakura S."/>
            <person name="Fukuzumi Y."/>
            <person name="Fujimori Y."/>
            <person name="Komiyama M."/>
            <person name="Tashiro H."/>
            <person name="Tanigami A."/>
            <person name="Fujiwara T."/>
            <person name="Ono T."/>
            <person name="Yamada K."/>
            <person name="Fujii Y."/>
            <person name="Ozaki K."/>
            <person name="Hirao M."/>
            <person name="Ohmori Y."/>
            <person name="Kawabata A."/>
            <person name="Hikiji T."/>
            <person name="Kobatake N."/>
            <person name="Inagaki H."/>
            <person name="Ikema Y."/>
            <person name="Okamoto S."/>
            <person name="Okitani R."/>
            <person name="Kawakami T."/>
            <person name="Noguchi S."/>
            <person name="Itoh T."/>
            <person name="Shigeta K."/>
            <person name="Senba T."/>
            <person name="Matsumura K."/>
            <person name="Nakajima Y."/>
            <person name="Mizuno T."/>
            <person name="Morinaga M."/>
            <person name="Sasaki M."/>
            <person name="Togashi T."/>
            <person name="Oyama M."/>
            <person name="Hata H."/>
            <person name="Watanabe M."/>
            <person name="Komatsu T."/>
            <person name="Mizushima-Sugano J."/>
            <person name="Satoh T."/>
            <person name="Shirai Y."/>
            <person name="Takahashi Y."/>
            <person name="Nakagawa K."/>
            <person name="Okumura K."/>
            <person name="Nagase T."/>
            <person name="Nomura N."/>
            <person name="Kikuchi H."/>
            <person name="Masuho Y."/>
            <person name="Yamashita R."/>
            <person name="Nakai K."/>
            <person name="Yada T."/>
            <person name="Nakamura Y."/>
            <person name="Ohara O."/>
            <person name="Isogai T."/>
            <person name="Sugano S."/>
        </authorList>
    </citation>
    <scope>NUCLEOTIDE SEQUENCE [LARGE SCALE MRNA]</scope>
    <source>
        <tissue>Embryo</tissue>
    </source>
</reference>
<reference key="3">
    <citation type="submission" date="2005-07" db="EMBL/GenBank/DDBJ databases">
        <authorList>
            <person name="Mural R.J."/>
            <person name="Istrail S."/>
            <person name="Sutton G.G."/>
            <person name="Florea L."/>
            <person name="Halpern A.L."/>
            <person name="Mobarry C.M."/>
            <person name="Lippert R."/>
            <person name="Walenz B."/>
            <person name="Shatkay H."/>
            <person name="Dew I."/>
            <person name="Miller J.R."/>
            <person name="Flanigan M.J."/>
            <person name="Edwards N.J."/>
            <person name="Bolanos R."/>
            <person name="Fasulo D."/>
            <person name="Halldorsson B.V."/>
            <person name="Hannenhalli S."/>
            <person name="Turner R."/>
            <person name="Yooseph S."/>
            <person name="Lu F."/>
            <person name="Nusskern D.R."/>
            <person name="Shue B.C."/>
            <person name="Zheng X.H."/>
            <person name="Zhong F."/>
            <person name="Delcher A.L."/>
            <person name="Huson D.H."/>
            <person name="Kravitz S.A."/>
            <person name="Mouchard L."/>
            <person name="Reinert K."/>
            <person name="Remington K.A."/>
            <person name="Clark A.G."/>
            <person name="Waterman M.S."/>
            <person name="Eichler E.E."/>
            <person name="Adams M.D."/>
            <person name="Hunkapiller M.W."/>
            <person name="Myers E.W."/>
            <person name="Venter J.C."/>
        </authorList>
    </citation>
    <scope>NUCLEOTIDE SEQUENCE [LARGE SCALE GENOMIC DNA]</scope>
</reference>
<reference key="4">
    <citation type="journal article" date="2004" name="Genome Res.">
        <title>The status, quality, and expansion of the NIH full-length cDNA project: the Mammalian Gene Collection (MGC).</title>
        <authorList>
            <consortium name="The MGC Project Team"/>
        </authorList>
    </citation>
    <scope>NUCLEOTIDE SEQUENCE [LARGE SCALE MRNA]</scope>
    <source>
        <tissue>Placenta</tissue>
    </source>
</reference>
<name>EPYC_HUMAN</name>
<proteinExistence type="evidence at protein level"/>
<comment type="function">
    <text>May have a role in bone formation and also in establishing the ordered structure of cartilage through matrix organization.</text>
</comment>
<comment type="subcellular location">
    <subcellularLocation>
        <location evidence="1">Secreted</location>
        <location evidence="1">Extracellular space</location>
        <location evidence="1">Extracellular matrix</location>
    </subcellularLocation>
</comment>
<comment type="tissue specificity">
    <text evidence="5">Cartilage, ligament, and placenta.</text>
</comment>
<comment type="PTM">
    <text evidence="2">The O-linked polysaccharides on Thr-60 and Ser-96 are probably the mucin type linked to GalNAc. There is one glycosaminoglycan chain, known to be dermatan sulfate, and it is probably the O-glycosylation at Ser-64.</text>
</comment>
<comment type="similarity">
    <text evidence="6">Belongs to the small leucine-rich proteoglycan (SLRP) family. SLRP class III subfamily.</text>
</comment>
<sequence length="322" mass="36637">MKTLAGLVLGLVIFDAAVTAPTLESINYDSETYDATLEDLDNLYNYENIPVDKVEIEIATVMPSGNRELLTPPPQPEKAQEEEEEEESTPRLIDGSSPQEPEFTGVLGPHTNEDFPTCLLCTCISTTVYCDDHELDAIPPLPKNTAYFYSRFNRIKKINKNDFASLSDLKRIDLTSNLISEIDEDAFRKLPQLRELVLRDNKIRQLPELPTTLTFIDISNNRLGRKGIKQEAFKDMYDLHHLYLTDNNLDHIPLPLPENLRALHLQNNNILEMHEDTFCNVKNLTYIRKALEDIRLDGNPINLSKTPQAYMCLPRLPVGSLV</sequence>
<keyword id="KW-1015">Disulfide bond</keyword>
<keyword id="KW-0272">Extracellular matrix</keyword>
<keyword id="KW-0325">Glycoprotein</keyword>
<keyword id="KW-0433">Leucine-rich repeat</keyword>
<keyword id="KW-0654">Proteoglycan</keyword>
<keyword id="KW-1267">Proteomics identification</keyword>
<keyword id="KW-1185">Reference proteome</keyword>
<keyword id="KW-0677">Repeat</keyword>
<keyword id="KW-0964">Secreted</keyword>
<keyword id="KW-0732">Signal</keyword>
<evidence type="ECO:0000250" key="1"/>
<evidence type="ECO:0000250" key="2">
    <source>
        <dbReference type="UniProtKB" id="P79119"/>
    </source>
</evidence>
<evidence type="ECO:0000255" key="3"/>
<evidence type="ECO:0000256" key="4">
    <source>
        <dbReference type="SAM" id="MobiDB-lite"/>
    </source>
</evidence>
<evidence type="ECO:0000269" key="5">
    <source>
    </source>
</evidence>
<evidence type="ECO:0000305" key="6"/>
<protein>
    <recommendedName>
        <fullName>Epiphycan</fullName>
    </recommendedName>
    <alternativeName>
        <fullName>Dermatan sulfate proteoglycan 3</fullName>
    </alternativeName>
    <alternativeName>
        <fullName>Proteoglycan-Lb</fullName>
        <shortName>PG-Lb</shortName>
    </alternativeName>
    <alternativeName>
        <fullName>Small chondroitin/dermatan sulfate proteoglycan</fullName>
    </alternativeName>
</protein>